<evidence type="ECO:0000255" key="1">
    <source>
        <dbReference type="HAMAP-Rule" id="MF_00031"/>
    </source>
</evidence>
<accession>A7FIC6</accession>
<name>RUVA_YERP3</name>
<gene>
    <name evidence="1" type="primary">ruvA</name>
    <name type="ordered locus">YpsIP31758_2031</name>
</gene>
<organism>
    <name type="scientific">Yersinia pseudotuberculosis serotype O:1b (strain IP 31758)</name>
    <dbReference type="NCBI Taxonomy" id="349747"/>
    <lineage>
        <taxon>Bacteria</taxon>
        <taxon>Pseudomonadati</taxon>
        <taxon>Pseudomonadota</taxon>
        <taxon>Gammaproteobacteria</taxon>
        <taxon>Enterobacterales</taxon>
        <taxon>Yersiniaceae</taxon>
        <taxon>Yersinia</taxon>
    </lineage>
</organism>
<feature type="chain" id="PRO_1000057242" description="Holliday junction branch migration complex subunit RuvA">
    <location>
        <begin position="1"/>
        <end position="204"/>
    </location>
</feature>
<feature type="region of interest" description="Domain I" evidence="1">
    <location>
        <begin position="1"/>
        <end position="64"/>
    </location>
</feature>
<feature type="region of interest" description="Domain II" evidence="1">
    <location>
        <begin position="65"/>
        <end position="142"/>
    </location>
</feature>
<feature type="region of interest" description="Flexible linker" evidence="1">
    <location>
        <begin position="143"/>
        <end position="155"/>
    </location>
</feature>
<feature type="region of interest" description="Domain III" evidence="1">
    <location>
        <begin position="156"/>
        <end position="204"/>
    </location>
</feature>
<comment type="function">
    <text evidence="1">The RuvA-RuvB-RuvC complex processes Holliday junction (HJ) DNA during genetic recombination and DNA repair, while the RuvA-RuvB complex plays an important role in the rescue of blocked DNA replication forks via replication fork reversal (RFR). RuvA specifically binds to HJ cruciform DNA, conferring on it an open structure. The RuvB hexamer acts as an ATP-dependent pump, pulling dsDNA into and through the RuvAB complex. HJ branch migration allows RuvC to scan DNA until it finds its consensus sequence, where it cleaves and resolves the cruciform DNA.</text>
</comment>
<comment type="subunit">
    <text evidence="1">Homotetramer. Forms an RuvA(8)-RuvB(12)-Holliday junction (HJ) complex. HJ DNA is sandwiched between 2 RuvA tetramers; dsDNA enters through RuvA and exits via RuvB. An RuvB hexamer assembles on each DNA strand where it exits the tetramer. Each RuvB hexamer is contacted by two RuvA subunits (via domain III) on 2 adjacent RuvB subunits; this complex drives branch migration. In the full resolvosome a probable DNA-RuvA(4)-RuvB(12)-RuvC(2) complex forms which resolves the HJ.</text>
</comment>
<comment type="subcellular location">
    <subcellularLocation>
        <location evidence="1">Cytoplasm</location>
    </subcellularLocation>
</comment>
<comment type="domain">
    <text evidence="1">Has three domains with a flexible linker between the domains II and III and assumes an 'L' shape. Domain III is highly mobile and contacts RuvB.</text>
</comment>
<comment type="similarity">
    <text evidence="1">Belongs to the RuvA family.</text>
</comment>
<protein>
    <recommendedName>
        <fullName evidence="1">Holliday junction branch migration complex subunit RuvA</fullName>
    </recommendedName>
</protein>
<dbReference type="EMBL" id="CP000720">
    <property type="protein sequence ID" value="ABS48479.1"/>
    <property type="molecule type" value="Genomic_DNA"/>
</dbReference>
<dbReference type="RefSeq" id="WP_002211199.1">
    <property type="nucleotide sequence ID" value="NC_009708.1"/>
</dbReference>
<dbReference type="SMR" id="A7FIC6"/>
<dbReference type="GeneID" id="57976604"/>
<dbReference type="KEGG" id="ypi:YpsIP31758_2031"/>
<dbReference type="HOGENOM" id="CLU_087936_0_0_6"/>
<dbReference type="Proteomes" id="UP000002412">
    <property type="component" value="Chromosome"/>
</dbReference>
<dbReference type="GO" id="GO:0005737">
    <property type="term" value="C:cytoplasm"/>
    <property type="evidence" value="ECO:0007669"/>
    <property type="project" value="UniProtKB-SubCell"/>
</dbReference>
<dbReference type="GO" id="GO:0009379">
    <property type="term" value="C:Holliday junction helicase complex"/>
    <property type="evidence" value="ECO:0007669"/>
    <property type="project" value="InterPro"/>
</dbReference>
<dbReference type="GO" id="GO:0048476">
    <property type="term" value="C:Holliday junction resolvase complex"/>
    <property type="evidence" value="ECO:0007669"/>
    <property type="project" value="UniProtKB-UniRule"/>
</dbReference>
<dbReference type="GO" id="GO:0005524">
    <property type="term" value="F:ATP binding"/>
    <property type="evidence" value="ECO:0007669"/>
    <property type="project" value="InterPro"/>
</dbReference>
<dbReference type="GO" id="GO:0000400">
    <property type="term" value="F:four-way junction DNA binding"/>
    <property type="evidence" value="ECO:0007669"/>
    <property type="project" value="UniProtKB-UniRule"/>
</dbReference>
<dbReference type="GO" id="GO:0009378">
    <property type="term" value="F:four-way junction helicase activity"/>
    <property type="evidence" value="ECO:0007669"/>
    <property type="project" value="InterPro"/>
</dbReference>
<dbReference type="GO" id="GO:0006310">
    <property type="term" value="P:DNA recombination"/>
    <property type="evidence" value="ECO:0007669"/>
    <property type="project" value="UniProtKB-UniRule"/>
</dbReference>
<dbReference type="GO" id="GO:0006281">
    <property type="term" value="P:DNA repair"/>
    <property type="evidence" value="ECO:0007669"/>
    <property type="project" value="UniProtKB-UniRule"/>
</dbReference>
<dbReference type="CDD" id="cd14332">
    <property type="entry name" value="UBA_RuvA_C"/>
    <property type="match status" value="1"/>
</dbReference>
<dbReference type="FunFam" id="1.10.150.20:FF:000012">
    <property type="entry name" value="Holliday junction ATP-dependent DNA helicase RuvA"/>
    <property type="match status" value="1"/>
</dbReference>
<dbReference type="FunFam" id="2.40.50.140:FF:000083">
    <property type="entry name" value="Holliday junction ATP-dependent DNA helicase RuvA"/>
    <property type="match status" value="1"/>
</dbReference>
<dbReference type="Gene3D" id="1.10.150.20">
    <property type="entry name" value="5' to 3' exonuclease, C-terminal subdomain"/>
    <property type="match status" value="1"/>
</dbReference>
<dbReference type="Gene3D" id="1.10.8.10">
    <property type="entry name" value="DNA helicase RuvA subunit, C-terminal domain"/>
    <property type="match status" value="1"/>
</dbReference>
<dbReference type="Gene3D" id="2.40.50.140">
    <property type="entry name" value="Nucleic acid-binding proteins"/>
    <property type="match status" value="1"/>
</dbReference>
<dbReference type="HAMAP" id="MF_00031">
    <property type="entry name" value="DNA_HJ_migration_RuvA"/>
    <property type="match status" value="1"/>
</dbReference>
<dbReference type="InterPro" id="IPR013849">
    <property type="entry name" value="DNA_helicase_Holl-junc_RuvA_I"/>
</dbReference>
<dbReference type="InterPro" id="IPR003583">
    <property type="entry name" value="Hlx-hairpin-Hlx_DNA-bd_motif"/>
</dbReference>
<dbReference type="InterPro" id="IPR012340">
    <property type="entry name" value="NA-bd_OB-fold"/>
</dbReference>
<dbReference type="InterPro" id="IPR000085">
    <property type="entry name" value="RuvA"/>
</dbReference>
<dbReference type="InterPro" id="IPR010994">
    <property type="entry name" value="RuvA_2-like"/>
</dbReference>
<dbReference type="InterPro" id="IPR011114">
    <property type="entry name" value="RuvA_C"/>
</dbReference>
<dbReference type="InterPro" id="IPR036267">
    <property type="entry name" value="RuvA_C_sf"/>
</dbReference>
<dbReference type="NCBIfam" id="TIGR00084">
    <property type="entry name" value="ruvA"/>
    <property type="match status" value="1"/>
</dbReference>
<dbReference type="Pfam" id="PF14520">
    <property type="entry name" value="HHH_5"/>
    <property type="match status" value="1"/>
</dbReference>
<dbReference type="Pfam" id="PF07499">
    <property type="entry name" value="RuvA_C"/>
    <property type="match status" value="1"/>
</dbReference>
<dbReference type="Pfam" id="PF01330">
    <property type="entry name" value="RuvA_N"/>
    <property type="match status" value="1"/>
</dbReference>
<dbReference type="SMART" id="SM00278">
    <property type="entry name" value="HhH1"/>
    <property type="match status" value="2"/>
</dbReference>
<dbReference type="SUPFAM" id="SSF46929">
    <property type="entry name" value="DNA helicase RuvA subunit, C-terminal domain"/>
    <property type="match status" value="1"/>
</dbReference>
<dbReference type="SUPFAM" id="SSF50249">
    <property type="entry name" value="Nucleic acid-binding proteins"/>
    <property type="match status" value="1"/>
</dbReference>
<dbReference type="SUPFAM" id="SSF47781">
    <property type="entry name" value="RuvA domain 2-like"/>
    <property type="match status" value="1"/>
</dbReference>
<proteinExistence type="inferred from homology"/>
<sequence>MIGRLRGIILEKQPPLVLLETNGVGYEVQLPMTCFYELPELGQEAIIFTQFVVREDAQLLYGFNNKQERALFRELIKVNGVGPKLALAILSGMSAQQFVGAVEREDITTLVKLPGVGKKTAERLVVEMKDRFKGLNGDLFNNTGDISLPTASPQTSDADIEAEAASALVALGYKPQEASRLVSKIAKPGADCETLIRDALRAAL</sequence>
<keyword id="KW-0963">Cytoplasm</keyword>
<keyword id="KW-0227">DNA damage</keyword>
<keyword id="KW-0233">DNA recombination</keyword>
<keyword id="KW-0234">DNA repair</keyword>
<keyword id="KW-0238">DNA-binding</keyword>
<reference key="1">
    <citation type="journal article" date="2007" name="PLoS Genet.">
        <title>The complete genome sequence of Yersinia pseudotuberculosis IP31758, the causative agent of Far East scarlet-like fever.</title>
        <authorList>
            <person name="Eppinger M."/>
            <person name="Rosovitz M.J."/>
            <person name="Fricke W.F."/>
            <person name="Rasko D.A."/>
            <person name="Kokorina G."/>
            <person name="Fayolle C."/>
            <person name="Lindler L.E."/>
            <person name="Carniel E."/>
            <person name="Ravel J."/>
        </authorList>
    </citation>
    <scope>NUCLEOTIDE SEQUENCE [LARGE SCALE GENOMIC DNA]</scope>
    <source>
        <strain>IP 31758</strain>
    </source>
</reference>